<name>ISCR_VIBCH</name>
<accession>Q9KTY3</accession>
<sequence length="173" mass="18657">MRLTSKGRYAVTAMLDVALHSQQNPVPLADISERQGISLSYLEQLFSKLRKAGLVASVRGPGGGYRLGMDSYAISIGTVIAAVDESVDATKCNGKGDCQGGTRCLTHTLWRDLSSRITDFLNNITLGELMMDNEVLEVSDRQDLHLAVSQRVSQNNSNTVTIGAAPFGINVRS</sequence>
<reference key="1">
    <citation type="journal article" date="2000" name="Nature">
        <title>DNA sequence of both chromosomes of the cholera pathogen Vibrio cholerae.</title>
        <authorList>
            <person name="Heidelberg J.F."/>
            <person name="Eisen J.A."/>
            <person name="Nelson W.C."/>
            <person name="Clayton R.A."/>
            <person name="Gwinn M.L."/>
            <person name="Dodson R.J."/>
            <person name="Haft D.H."/>
            <person name="Hickey E.K."/>
            <person name="Peterson J.D."/>
            <person name="Umayam L.A."/>
            <person name="Gill S.R."/>
            <person name="Nelson K.E."/>
            <person name="Read T.D."/>
            <person name="Tettelin H."/>
            <person name="Richardson D.L."/>
            <person name="Ermolaeva M.D."/>
            <person name="Vamathevan J.J."/>
            <person name="Bass S."/>
            <person name="Qin H."/>
            <person name="Dragoi I."/>
            <person name="Sellers P."/>
            <person name="McDonald L.A."/>
            <person name="Utterback T.R."/>
            <person name="Fleischmann R.D."/>
            <person name="Nierman W.C."/>
            <person name="White O."/>
            <person name="Salzberg S.L."/>
            <person name="Smith H.O."/>
            <person name="Colwell R.R."/>
            <person name="Mekalanos J.J."/>
            <person name="Venter J.C."/>
            <person name="Fraser C.M."/>
        </authorList>
    </citation>
    <scope>NUCLEOTIDE SEQUENCE [LARGE SCALE GENOMIC DNA]</scope>
    <source>
        <strain>ATCC 39315 / El Tor Inaba N16961</strain>
    </source>
</reference>
<keyword id="KW-0001">2Fe-2S</keyword>
<keyword id="KW-0010">Activator</keyword>
<keyword id="KW-0238">DNA-binding</keyword>
<keyword id="KW-0408">Iron</keyword>
<keyword id="KW-0411">Iron-sulfur</keyword>
<keyword id="KW-0479">Metal-binding</keyword>
<keyword id="KW-1185">Reference proteome</keyword>
<keyword id="KW-0678">Repressor</keyword>
<keyword id="KW-0804">Transcription</keyword>
<keyword id="KW-0805">Transcription regulation</keyword>
<protein>
    <recommendedName>
        <fullName evidence="1">HTH-type transcriptional regulator IscR</fullName>
    </recommendedName>
</protein>
<comment type="function">
    <text evidence="1">Regulates the transcription of several operons and genes involved in the biogenesis of Fe-S clusters and Fe-S-containing proteins.</text>
</comment>
<comment type="cofactor">
    <cofactor evidence="1">
        <name>[2Fe-2S] cluster</name>
        <dbReference type="ChEBI" id="CHEBI:190135"/>
    </cofactor>
    <text evidence="1">Binds 1 [2Fe-2S] cluster.</text>
</comment>
<comment type="sequence caution" evidence="2">
    <conflict type="erroneous initiation">
        <sequence resource="EMBL-CDS" id="AAF93912"/>
    </conflict>
</comment>
<gene>
    <name evidence="1" type="primary">iscR</name>
    <name type="ordered locus">VC_0747</name>
</gene>
<organism>
    <name type="scientific">Vibrio cholerae serotype O1 (strain ATCC 39315 / El Tor Inaba N16961)</name>
    <dbReference type="NCBI Taxonomy" id="243277"/>
    <lineage>
        <taxon>Bacteria</taxon>
        <taxon>Pseudomonadati</taxon>
        <taxon>Pseudomonadota</taxon>
        <taxon>Gammaproteobacteria</taxon>
        <taxon>Vibrionales</taxon>
        <taxon>Vibrionaceae</taxon>
        <taxon>Vibrio</taxon>
    </lineage>
</organism>
<feature type="chain" id="PRO_0000268930" description="HTH-type transcriptional regulator IscR">
    <location>
        <begin position="1"/>
        <end position="173"/>
    </location>
</feature>
<feature type="domain" description="HTH rrf2-type" evidence="1">
    <location>
        <begin position="2"/>
        <end position="131"/>
    </location>
</feature>
<feature type="DNA-binding region" description="H-T-H motif" evidence="1">
    <location>
        <begin position="28"/>
        <end position="51"/>
    </location>
</feature>
<feature type="binding site" evidence="1">
    <location>
        <position position="92"/>
    </location>
    <ligand>
        <name>[2Fe-2S] cluster</name>
        <dbReference type="ChEBI" id="CHEBI:190135"/>
    </ligand>
</feature>
<feature type="binding site" evidence="1">
    <location>
        <position position="98"/>
    </location>
    <ligand>
        <name>[2Fe-2S] cluster</name>
        <dbReference type="ChEBI" id="CHEBI:190135"/>
    </ligand>
</feature>
<feature type="binding site" evidence="1">
    <location>
        <position position="104"/>
    </location>
    <ligand>
        <name>[2Fe-2S] cluster</name>
        <dbReference type="ChEBI" id="CHEBI:190135"/>
    </ligand>
</feature>
<evidence type="ECO:0000255" key="1">
    <source>
        <dbReference type="HAMAP-Rule" id="MF_01176"/>
    </source>
</evidence>
<evidence type="ECO:0000305" key="2"/>
<proteinExistence type="inferred from homology"/>
<dbReference type="EMBL" id="AE003852">
    <property type="protein sequence ID" value="AAF93912.1"/>
    <property type="status" value="ALT_INIT"/>
    <property type="molecule type" value="Genomic_DNA"/>
</dbReference>
<dbReference type="PIR" id="F82285">
    <property type="entry name" value="F82285"/>
</dbReference>
<dbReference type="RefSeq" id="NP_230396.1">
    <property type="nucleotide sequence ID" value="NC_002505.1"/>
</dbReference>
<dbReference type="RefSeq" id="WP_001918301.1">
    <property type="nucleotide sequence ID" value="NZ_LT906614.1"/>
</dbReference>
<dbReference type="SMR" id="Q9KTY3"/>
<dbReference type="STRING" id="243277.VC_0747"/>
<dbReference type="DNASU" id="2615756"/>
<dbReference type="EnsemblBacteria" id="AAF93912">
    <property type="protein sequence ID" value="AAF93912"/>
    <property type="gene ID" value="VC_0747"/>
</dbReference>
<dbReference type="GeneID" id="89515108"/>
<dbReference type="KEGG" id="vch:VC_0747"/>
<dbReference type="PATRIC" id="fig|243277.26.peg.711"/>
<dbReference type="eggNOG" id="COG1959">
    <property type="taxonomic scope" value="Bacteria"/>
</dbReference>
<dbReference type="HOGENOM" id="CLU_107144_0_0_6"/>
<dbReference type="Proteomes" id="UP000000584">
    <property type="component" value="Chromosome 1"/>
</dbReference>
<dbReference type="GO" id="GO:0005829">
    <property type="term" value="C:cytosol"/>
    <property type="evidence" value="ECO:0000318"/>
    <property type="project" value="GO_Central"/>
</dbReference>
<dbReference type="GO" id="GO:0051537">
    <property type="term" value="F:2 iron, 2 sulfur cluster binding"/>
    <property type="evidence" value="ECO:0007669"/>
    <property type="project" value="UniProtKB-KW"/>
</dbReference>
<dbReference type="GO" id="GO:0003700">
    <property type="term" value="F:DNA-binding transcription factor activity"/>
    <property type="evidence" value="ECO:0000318"/>
    <property type="project" value="GO_Central"/>
</dbReference>
<dbReference type="GO" id="GO:0003690">
    <property type="term" value="F:double-stranded DNA binding"/>
    <property type="evidence" value="ECO:0007669"/>
    <property type="project" value="UniProtKB-UniRule"/>
</dbReference>
<dbReference type="GO" id="GO:0005506">
    <property type="term" value="F:iron ion binding"/>
    <property type="evidence" value="ECO:0007669"/>
    <property type="project" value="UniProtKB-UniRule"/>
</dbReference>
<dbReference type="GO" id="GO:0006355">
    <property type="term" value="P:regulation of DNA-templated transcription"/>
    <property type="evidence" value="ECO:0000318"/>
    <property type="project" value="GO_Central"/>
</dbReference>
<dbReference type="FunFam" id="1.10.10.10:FF:000026">
    <property type="entry name" value="HTH-type transcriptional regulator IscR"/>
    <property type="match status" value="1"/>
</dbReference>
<dbReference type="Gene3D" id="1.10.10.10">
    <property type="entry name" value="Winged helix-like DNA-binding domain superfamily/Winged helix DNA-binding domain"/>
    <property type="match status" value="1"/>
</dbReference>
<dbReference type="HAMAP" id="MF_01176">
    <property type="entry name" value="HTH_type_IscR"/>
    <property type="match status" value="1"/>
</dbReference>
<dbReference type="InterPro" id="IPR010242">
    <property type="entry name" value="TF_HTH_IscR"/>
</dbReference>
<dbReference type="InterPro" id="IPR030489">
    <property type="entry name" value="TR_Rrf2-type_CS"/>
</dbReference>
<dbReference type="InterPro" id="IPR000944">
    <property type="entry name" value="Tscrpt_reg_Rrf2"/>
</dbReference>
<dbReference type="InterPro" id="IPR036388">
    <property type="entry name" value="WH-like_DNA-bd_sf"/>
</dbReference>
<dbReference type="InterPro" id="IPR036390">
    <property type="entry name" value="WH_DNA-bd_sf"/>
</dbReference>
<dbReference type="NCBIfam" id="TIGR02010">
    <property type="entry name" value="IscR"/>
    <property type="match status" value="1"/>
</dbReference>
<dbReference type="NCBIfam" id="NF008110">
    <property type="entry name" value="PRK10857.1"/>
    <property type="match status" value="1"/>
</dbReference>
<dbReference type="NCBIfam" id="TIGR00738">
    <property type="entry name" value="rrf2_super"/>
    <property type="match status" value="1"/>
</dbReference>
<dbReference type="PANTHER" id="PTHR33221:SF5">
    <property type="entry name" value="HTH-TYPE TRANSCRIPTIONAL REGULATOR ISCR"/>
    <property type="match status" value="1"/>
</dbReference>
<dbReference type="PANTHER" id="PTHR33221">
    <property type="entry name" value="WINGED HELIX-TURN-HELIX TRANSCRIPTIONAL REGULATOR, RRF2 FAMILY"/>
    <property type="match status" value="1"/>
</dbReference>
<dbReference type="Pfam" id="PF02082">
    <property type="entry name" value="Rrf2"/>
    <property type="match status" value="1"/>
</dbReference>
<dbReference type="SUPFAM" id="SSF46785">
    <property type="entry name" value="Winged helix' DNA-binding domain"/>
    <property type="match status" value="1"/>
</dbReference>
<dbReference type="PROSITE" id="PS01332">
    <property type="entry name" value="HTH_RRF2_1"/>
    <property type="match status" value="1"/>
</dbReference>
<dbReference type="PROSITE" id="PS51197">
    <property type="entry name" value="HTH_RRF2_2"/>
    <property type="match status" value="1"/>
</dbReference>